<comment type="function">
    <text evidence="2">Acts as a transcriptional regulator. Inhibits myogenesis by sequestrating E proteins, inhibiting trans-activation by MEF2, and inhibiting DNA-binding by MYOD1 through physical interaction. This interaction probably involves the basic domains of both proteins. Also represses expression of pro-inflammatory cytokines such as TNFA and IL1B. Regulates cranial suture patterning and fusion. Activates transcription as a heterodimer with E proteins. Regulates gene expression differentially, depending on dimer composition. Homodimers induce expression of FGFR2 and POSTN while heterodimers repress FGFR2 and POSTN expression and induce THBS1 expression. Heterodimerization is also required for osteoblast differentiation. Represses the activity of the circadian transcriptional activator: NPAS2-BMAL1 heterodimer (By similarity).</text>
</comment>
<comment type="subunit">
    <text evidence="2">Efficient DNA binding requires dimerization with another bHLH protein. Homodimer or heterodimer with E proteins such as TCF3. ID1 binds preferentially to TCF3 but does not interact efficiently with TWIST1 so ID1 levels control the amount of TCF3 available to dimerize with TWIST and thus determine the type of dimer formed (By similarity).</text>
</comment>
<comment type="subcellular location">
    <subcellularLocation>
        <location evidence="3">Nucleus</location>
    </subcellularLocation>
</comment>
<proteinExistence type="inferred from homology"/>
<sequence>MMQDVSSSPVSPADDSLSNSEEEPDRQQPPSGKRGGRKRRSSRRSAGGGAGPGGAAGGVGGGDEPGSPAQGKRGKKSAGCGGGAGGGGSSSGGGSPQSYEELQTQRVMANVRERQRTQSLNEAFAALRKIIPTLPSDKLSKIQTLKLAARYIDFLYQVLQSDELDSKMASCSYVAHERLSYAFSVWRMEGAWSMSASH</sequence>
<keyword id="KW-0010">Activator</keyword>
<keyword id="KW-0090">Biological rhythms</keyword>
<keyword id="KW-0217">Developmental protein</keyword>
<keyword id="KW-0221">Differentiation</keyword>
<keyword id="KW-0238">DNA-binding</keyword>
<keyword id="KW-0517">Myogenesis</keyword>
<keyword id="KW-0539">Nucleus</keyword>
<keyword id="KW-0678">Repressor</keyword>
<keyword id="KW-0804">Transcription</keyword>
<keyword id="KW-0805">Transcription regulation</keyword>
<evidence type="ECO:0000250" key="1"/>
<evidence type="ECO:0000250" key="2">
    <source>
        <dbReference type="UniProtKB" id="P26687"/>
    </source>
</evidence>
<evidence type="ECO:0000255" key="3">
    <source>
        <dbReference type="PROSITE-ProRule" id="PRU00981"/>
    </source>
</evidence>
<evidence type="ECO:0000256" key="4">
    <source>
        <dbReference type="SAM" id="MobiDB-lite"/>
    </source>
</evidence>
<dbReference type="EMBL" id="AJ488166">
    <property type="protein sequence ID" value="CAD32480.1"/>
    <property type="molecule type" value="Genomic_DNA"/>
</dbReference>
<dbReference type="SMR" id="Q8MIF3"/>
<dbReference type="GO" id="GO:0005634">
    <property type="term" value="C:nucleus"/>
    <property type="evidence" value="ECO:0007669"/>
    <property type="project" value="UniProtKB-SubCell"/>
</dbReference>
<dbReference type="GO" id="GO:0000981">
    <property type="term" value="F:DNA-binding transcription factor activity, RNA polymerase II-specific"/>
    <property type="evidence" value="ECO:0007669"/>
    <property type="project" value="InterPro"/>
</dbReference>
<dbReference type="GO" id="GO:0046983">
    <property type="term" value="F:protein dimerization activity"/>
    <property type="evidence" value="ECO:0007669"/>
    <property type="project" value="InterPro"/>
</dbReference>
<dbReference type="GO" id="GO:0000977">
    <property type="term" value="F:RNA polymerase II transcription regulatory region sequence-specific DNA binding"/>
    <property type="evidence" value="ECO:0007669"/>
    <property type="project" value="TreeGrafter"/>
</dbReference>
<dbReference type="GO" id="GO:0030154">
    <property type="term" value="P:cell differentiation"/>
    <property type="evidence" value="ECO:0007669"/>
    <property type="project" value="UniProtKB-KW"/>
</dbReference>
<dbReference type="GO" id="GO:0007517">
    <property type="term" value="P:muscle organ development"/>
    <property type="evidence" value="ECO:0007669"/>
    <property type="project" value="UniProtKB-KW"/>
</dbReference>
<dbReference type="GO" id="GO:0045892">
    <property type="term" value="P:negative regulation of DNA-templated transcription"/>
    <property type="evidence" value="ECO:0000250"/>
    <property type="project" value="UniProtKB"/>
</dbReference>
<dbReference type="GO" id="GO:0048511">
    <property type="term" value="P:rhythmic process"/>
    <property type="evidence" value="ECO:0007669"/>
    <property type="project" value="UniProtKB-KW"/>
</dbReference>
<dbReference type="CDD" id="cd11412">
    <property type="entry name" value="bHLH_TS_TWIST1"/>
    <property type="match status" value="1"/>
</dbReference>
<dbReference type="FunFam" id="4.10.280.10:FF:000030">
    <property type="entry name" value="Twist transcription factor"/>
    <property type="match status" value="1"/>
</dbReference>
<dbReference type="Gene3D" id="4.10.280.10">
    <property type="entry name" value="Helix-loop-helix DNA-binding domain"/>
    <property type="match status" value="1"/>
</dbReference>
<dbReference type="InterPro" id="IPR011598">
    <property type="entry name" value="bHLH_dom"/>
</dbReference>
<dbReference type="InterPro" id="IPR050283">
    <property type="entry name" value="E-box_TF_Regulators"/>
</dbReference>
<dbReference type="InterPro" id="IPR036638">
    <property type="entry name" value="HLH_DNA-bd_sf"/>
</dbReference>
<dbReference type="InterPro" id="IPR047093">
    <property type="entry name" value="TWIST1_bHLH"/>
</dbReference>
<dbReference type="PANTHER" id="PTHR23349">
    <property type="entry name" value="BASIC HELIX-LOOP-HELIX TRANSCRIPTION FACTOR, TWIST"/>
    <property type="match status" value="1"/>
</dbReference>
<dbReference type="PANTHER" id="PTHR23349:SF64">
    <property type="entry name" value="TWIST-RELATED PROTEIN 1"/>
    <property type="match status" value="1"/>
</dbReference>
<dbReference type="Pfam" id="PF00010">
    <property type="entry name" value="HLH"/>
    <property type="match status" value="1"/>
</dbReference>
<dbReference type="SMART" id="SM00353">
    <property type="entry name" value="HLH"/>
    <property type="match status" value="1"/>
</dbReference>
<dbReference type="SUPFAM" id="SSF47459">
    <property type="entry name" value="HLH, helix-loop-helix DNA-binding domain"/>
    <property type="match status" value="1"/>
</dbReference>
<dbReference type="PROSITE" id="PS50888">
    <property type="entry name" value="BHLH"/>
    <property type="match status" value="1"/>
</dbReference>
<gene>
    <name type="primary">TWIST1</name>
    <name type="synonym">TWIST</name>
</gene>
<name>TWST1_EULFU</name>
<accession>Q8MIF3</accession>
<feature type="chain" id="PRO_0000127481" description="Twist-related protein 1">
    <location>
        <begin position="1"/>
        <end position="198"/>
    </location>
</feature>
<feature type="domain" description="bHLH" evidence="3">
    <location>
        <begin position="104"/>
        <end position="155"/>
    </location>
</feature>
<feature type="region of interest" description="Disordered" evidence="4">
    <location>
        <begin position="1"/>
        <end position="101"/>
    </location>
</feature>
<feature type="region of interest" description="Sufficient for transactivation activity" evidence="1">
    <location>
        <begin position="157"/>
        <end position="187"/>
    </location>
</feature>
<feature type="compositionally biased region" description="Low complexity" evidence="4">
    <location>
        <begin position="1"/>
        <end position="18"/>
    </location>
</feature>
<feature type="compositionally biased region" description="Basic residues" evidence="4">
    <location>
        <begin position="34"/>
        <end position="43"/>
    </location>
</feature>
<feature type="compositionally biased region" description="Gly residues" evidence="4">
    <location>
        <begin position="46"/>
        <end position="64"/>
    </location>
</feature>
<feature type="compositionally biased region" description="Gly residues" evidence="4">
    <location>
        <begin position="79"/>
        <end position="95"/>
    </location>
</feature>
<protein>
    <recommendedName>
        <fullName>Twist-related protein 1</fullName>
    </recommendedName>
</protein>
<reference key="1">
    <citation type="journal article" date="2002" name="Dev. Genes Evol.">
        <title>Natural Twist protein variants in a panel of eleven non-human primates: possible implications of Twist gene-tree for primate species tree.</title>
        <authorList>
            <person name="Gachot-Neveu H."/>
            <person name="Stoetzel C."/>
            <person name="Quillet R."/>
            <person name="Dollfus H."/>
            <person name="Perrin-Schmitt F."/>
        </authorList>
    </citation>
    <scope>NUCLEOTIDE SEQUENCE [GENOMIC DNA]</scope>
    <source>
        <tissue>Blood</tissue>
    </source>
</reference>
<organism>
    <name type="scientific">Eulemur fulvus fulvus</name>
    <name type="common">Brown lemur</name>
    <dbReference type="NCBI Taxonomy" id="40322"/>
    <lineage>
        <taxon>Eukaryota</taxon>
        <taxon>Metazoa</taxon>
        <taxon>Chordata</taxon>
        <taxon>Craniata</taxon>
        <taxon>Vertebrata</taxon>
        <taxon>Euteleostomi</taxon>
        <taxon>Mammalia</taxon>
        <taxon>Eutheria</taxon>
        <taxon>Euarchontoglires</taxon>
        <taxon>Primates</taxon>
        <taxon>Strepsirrhini</taxon>
        <taxon>Lemuriformes</taxon>
        <taxon>Lemuridae</taxon>
        <taxon>Eulemur</taxon>
    </lineage>
</organism>